<evidence type="ECO:0000250" key="1">
    <source>
        <dbReference type="UniProtKB" id="O75751"/>
    </source>
</evidence>
<evidence type="ECO:0000250" key="2">
    <source>
        <dbReference type="UniProtKB" id="O88446"/>
    </source>
</evidence>
<evidence type="ECO:0000255" key="3"/>
<evidence type="ECO:0000269" key="4">
    <source>
    </source>
</evidence>
<evidence type="ECO:0000269" key="5">
    <source>
    </source>
</evidence>
<evidence type="ECO:0000269" key="6">
    <source>
    </source>
</evidence>
<evidence type="ECO:0000269" key="7">
    <source>
    </source>
</evidence>
<evidence type="ECO:0000269" key="8">
    <source>
    </source>
</evidence>
<evidence type="ECO:0000303" key="9">
    <source>
    </source>
</evidence>
<evidence type="ECO:0000303" key="10">
    <source>
    </source>
</evidence>
<evidence type="ECO:0000305" key="11"/>
<evidence type="ECO:0000305" key="12">
    <source>
    </source>
</evidence>
<evidence type="ECO:0000312" key="13">
    <source>
        <dbReference type="MGI" id="MGI:1333817"/>
    </source>
</evidence>
<comment type="function">
    <text evidence="1 2 4 5 6 7">Electrogenic voltage-dependent transporter that mediates the transport of a variety of organic cations such as endogenous bioactive amines, cationic drugs and xenobiotics (PubMed:10966924, PubMed:18513366). Cation cellular uptake or release is driven by the electrochemical potential, i.e. membrane potential and concentration gradient (PubMed:10966924). Functions as a Na(+)- and Cl(-)-independent, bidirectional uniporter (By similarity). Implicated in monoamine neurotransmitters uptake such as dopamine, adrenaline/epinephrine, noradrenaline/norepinephrine, homovanillic acid, histamine, serotonin and tyramine, thereby supporting a role in homeostatic regulation of aminergic neurotransmission in the brain (PubMed:18513366, PubMed:19416912). Transports dopaminergic neuromodulators cyclo(his-pro) and salsolinol with low efficiency (By similarity). May be involved in the uptake and disposition of cationic compounds by renal clearance from the blood flow (PubMed:10966924). May contribute to regulate the transport of cationic compounds in testis across the blood-testis-barrier (By similarity). Mediates the transport of polyamine spermidine and putrescine (By similarity). Mediates the bidirectional transport of polyamine agmatine (By similarity). Also transports guanidine (PubMed:10966924). May also mediate intracellular transport of organic cations, thereby playing a role in amine metabolism and intracellular signaling (PubMed:27659446).</text>
</comment>
<comment type="catalytic activity">
    <reaction evidence="5">
        <text>(R)-noradrenaline(out) = (R)-noradrenaline(in)</text>
        <dbReference type="Rhea" id="RHEA:73871"/>
        <dbReference type="ChEBI" id="CHEBI:72587"/>
    </reaction>
</comment>
<comment type="catalytic activity">
    <reaction evidence="1">
        <text>(R)-adrenaline(out) = (R)-adrenaline(in)</text>
        <dbReference type="Rhea" id="RHEA:73875"/>
        <dbReference type="ChEBI" id="CHEBI:71406"/>
    </reaction>
</comment>
<comment type="catalytic activity">
    <reaction evidence="5">
        <text>serotonin(out) = serotonin(in)</text>
        <dbReference type="Rhea" id="RHEA:73867"/>
        <dbReference type="ChEBI" id="CHEBI:350546"/>
    </reaction>
</comment>
<comment type="catalytic activity">
    <reaction evidence="5">
        <text>dopamine(out) = dopamine(in)</text>
        <dbReference type="Rhea" id="RHEA:73863"/>
        <dbReference type="ChEBI" id="CHEBI:59905"/>
    </reaction>
</comment>
<comment type="catalytic activity">
    <reaction evidence="1">
        <text>histamine(out) = histamine(in)</text>
        <dbReference type="Rhea" id="RHEA:73879"/>
        <dbReference type="ChEBI" id="CHEBI:58432"/>
    </reaction>
</comment>
<comment type="catalytic activity">
    <reaction evidence="1">
        <text>tyramine(in) = tyramine(out)</text>
        <dbReference type="Rhea" id="RHEA:74783"/>
        <dbReference type="ChEBI" id="CHEBI:327995"/>
    </reaction>
</comment>
<comment type="catalytic activity">
    <reaction evidence="4">
        <text>guanidine(out) = guanidine(in)</text>
        <dbReference type="Rhea" id="RHEA:73883"/>
        <dbReference type="ChEBI" id="CHEBI:30087"/>
    </reaction>
</comment>
<comment type="catalytic activity">
    <reaction evidence="1">
        <text>agmatine(out) = agmatine(in)</text>
        <dbReference type="Rhea" id="RHEA:72131"/>
        <dbReference type="ChEBI" id="CHEBI:58145"/>
    </reaction>
</comment>
<comment type="catalytic activity">
    <reaction evidence="2">
        <text>spermidine(in) = spermidine(out)</text>
        <dbReference type="Rhea" id="RHEA:35039"/>
        <dbReference type="ChEBI" id="CHEBI:57834"/>
    </reaction>
</comment>
<comment type="catalytic activity">
    <reaction evidence="1">
        <text>L-histidyl-L-proline diketopiperazine(in) = L-histidyl-L-proline diketopiperazine(out)</text>
        <dbReference type="Rhea" id="RHEA:74787"/>
        <dbReference type="ChEBI" id="CHEBI:90039"/>
    </reaction>
</comment>
<comment type="catalytic activity">
    <reaction evidence="1">
        <text>(R)-salsolinol(in) = (R)-salsolinol(out)</text>
        <dbReference type="Rhea" id="RHEA:74791"/>
        <dbReference type="ChEBI" id="CHEBI:194082"/>
    </reaction>
</comment>
<comment type="biophysicochemical properties">
    <phDependence>
        <text evidence="4">Optimum pH is 8.5 for TEA uptake.</text>
    </phDependence>
</comment>
<comment type="subcellular location">
    <subcellularLocation>
        <location evidence="7">Cell membrane</location>
        <topology evidence="11">Multi-pass membrane protein</topology>
    </subcellularLocation>
    <subcellularLocation>
        <location evidence="1">Apical cell membrane</location>
        <topology evidence="11">Multi-pass membrane protein</topology>
    </subcellularLocation>
    <subcellularLocation>
        <location evidence="1">Basolateral cell membrane</location>
        <topology evidence="11">Multi-pass membrane protein</topology>
    </subcellularLocation>
    <subcellularLocation>
        <location evidence="7">Mitochondrion membrane</location>
    </subcellularLocation>
    <subcellularLocation>
        <location evidence="7">Endomembrane system</location>
    </subcellularLocation>
    <subcellularLocation>
        <location evidence="12">Nucleus membrane</location>
    </subcellularLocation>
    <subcellularLocation>
        <location evidence="2">Nucleus outer membrane</location>
    </subcellularLocation>
    <text evidence="7">Located to neuronal and glial endomembranes, including mitochondrial and nuclear membranes.</text>
</comment>
<comment type="tissue specificity">
    <text evidence="4 5 6 7 8">Highly expressed in placenta (PubMed:10966924, PubMed:9933568). Highly expressed in kidney cortex (PubMed:10966924). In kidney, expressed specifically in the proximal and distal convoluted tubules and within Bowman capsule (PubMed:10966924). Expressed in brain, particularly in dopaminergic neurons of the substantia nigra compacta, non-aminergic neurons of the ventral tegmental area, substantia nigra reticulata, locus coeruleus, hippocampus and cortex (PubMed:18513366). In brain, also detected in astrocytes in the substantia nigra reticulata, several hypothalamic nuclei and nigrostriatal region (PubMed:18513366, PubMed:19416912). Expressed in neurons and glial cells of amygdala (PubMed:27659446).</text>
</comment>
<comment type="developmental stage">
    <text evidence="8">Levels are high during gestation, but decrease greatly towards the end of gestation.</text>
</comment>
<comment type="domain">
    <text evidence="1">Contains one proline-rich sequence (Pro-Glu-Ser-Pro-Arg) that is required for transport activity.</text>
</comment>
<comment type="disruption phenotype">
    <text evidence="5 6">Knockout mice show altered monoamine neurotransmission in the brain, with decreased intracellular content and increased turnover of aminergic transmitters. Knockout mice show subtle alterations in behaviors such as increased sensitivity to psychostimulants and increased levels of anxiety and stress (PubMed:18513366). Also exhibit impaired removal of the excess extracellular dopamine induced by methamphetamine and increased striatal dopaminergic terminal damage caused by this psychostimulant (PubMed:19416912).</text>
</comment>
<comment type="miscellaneous">
    <text evidence="1 4 5 6">Mediates the uptake of clinically used drugs including neurotoxin 1-methyl-4-phenylpyridinium (MPP(+)) and platinum-based drug oxaliplatin (PubMed:10966924, PubMed:18513366, PubMed:19416912). Plays a role in the anticancer activity of oxaliplatin and may contribute to antitumor specificity (By similarity).</text>
</comment>
<comment type="similarity">
    <text evidence="11">Belongs to the major facilitator (TC 2.A.1) superfamily. Organic cation transporter (TC 2.A.1.19) family.</text>
</comment>
<protein>
    <recommendedName>
        <fullName evidence="10">Solute carrier family 22 member 3</fullName>
    </recommendedName>
    <alternativeName>
        <fullName evidence="9">Organic cation transporter 3</fullName>
        <shortName evidence="9">OCT3</shortName>
    </alternativeName>
</protein>
<organism>
    <name type="scientific">Mus musculus</name>
    <name type="common">Mouse</name>
    <dbReference type="NCBI Taxonomy" id="10090"/>
    <lineage>
        <taxon>Eukaryota</taxon>
        <taxon>Metazoa</taxon>
        <taxon>Chordata</taxon>
        <taxon>Craniata</taxon>
        <taxon>Vertebrata</taxon>
        <taxon>Euteleostomi</taxon>
        <taxon>Mammalia</taxon>
        <taxon>Eutheria</taxon>
        <taxon>Euarchontoglires</taxon>
        <taxon>Glires</taxon>
        <taxon>Rodentia</taxon>
        <taxon>Myomorpha</taxon>
        <taxon>Muroidea</taxon>
        <taxon>Muridae</taxon>
        <taxon>Murinae</taxon>
        <taxon>Mus</taxon>
        <taxon>Mus</taxon>
    </lineage>
</organism>
<sequence>MPTFDQALRKAGEFGRFQRRVFLLLCLTGVTFAFLFVGVVFLGSQPDYYWCRGPRATALAERCAWSPEEEWNLTTPELHVPAERRGQGHCHRYLLEATNTSSELSCDPLTAFPNRSAPLVSCSGDWRYVETHSTIVSQFDLVCSNAWMLDLTQAILNLGFLAGAFTLGYAADRYGRLIIYLISCFGVGITGVVVAFAPNFSVFVIFRFLQGVFGKGAWMTCFVIVTEIVGSKQRRIVGIVIQMFFTLGIIILPGIAYFTPSWQGIQLAISLPSFLFLLYYWVVPESPRWLITRKQGEKALQILRRVAKCNGKHLSSNYSEITVTDEEVSNPSCLDLVRTPQMRKCTLILMFAWFTSAVVYQGLVMRLGLIGGNLYIDFFISGLVELPGALLILLTIERLGRRLPFAASNIVAGVSCLVTAFLPEGIPWLRTTVATLGRLGITMAFEIVYLVNSELYPTTLRNFGVSLCSGLCDFGGIIAPFLLFRLAAIWLELPLIIFGILASVCGGLVMLLPETKGIALPETVEDVEKLGSSQLHQCGRKKKTQVSTSDV</sequence>
<dbReference type="EMBL" id="AF078750">
    <property type="protein sequence ID" value="AAD20978.1"/>
    <property type="molecule type" value="mRNA"/>
</dbReference>
<dbReference type="EMBL" id="AF078748">
    <property type="protein sequence ID" value="AAD20238.1"/>
    <property type="molecule type" value="Genomic_DNA"/>
</dbReference>
<dbReference type="EMBL" id="AF082566">
    <property type="protein sequence ID" value="AAD53007.1"/>
    <property type="molecule type" value="mRNA"/>
</dbReference>
<dbReference type="CCDS" id="CCDS28391.1"/>
<dbReference type="RefSeq" id="NP_035525.1">
    <property type="nucleotide sequence ID" value="NM_011395.2"/>
</dbReference>
<dbReference type="SMR" id="Q9WTW5"/>
<dbReference type="FunCoup" id="Q9WTW5">
    <property type="interactions" value="36"/>
</dbReference>
<dbReference type="STRING" id="10090.ENSMUSP00000024595"/>
<dbReference type="ChEMBL" id="CHEMBL2073684"/>
<dbReference type="GlyCosmos" id="Q9WTW5">
    <property type="glycosylation" value="5 sites, No reported glycans"/>
</dbReference>
<dbReference type="GlyGen" id="Q9WTW5">
    <property type="glycosylation" value="5 sites"/>
</dbReference>
<dbReference type="iPTMnet" id="Q9WTW5"/>
<dbReference type="PhosphoSitePlus" id="Q9WTW5"/>
<dbReference type="SwissPalm" id="Q9WTW5"/>
<dbReference type="jPOST" id="Q9WTW5"/>
<dbReference type="PaxDb" id="10090-ENSMUSP00000024595"/>
<dbReference type="ProteomicsDB" id="260884"/>
<dbReference type="Antibodypedia" id="20034">
    <property type="antibodies" value="206 antibodies from 33 providers"/>
</dbReference>
<dbReference type="DNASU" id="20519"/>
<dbReference type="Ensembl" id="ENSMUST00000024595.4">
    <property type="protein sequence ID" value="ENSMUSP00000024595.3"/>
    <property type="gene ID" value="ENSMUSG00000023828.4"/>
</dbReference>
<dbReference type="GeneID" id="20519"/>
<dbReference type="KEGG" id="mmu:20519"/>
<dbReference type="UCSC" id="uc008aku.1">
    <property type="organism name" value="mouse"/>
</dbReference>
<dbReference type="AGR" id="MGI:1333817"/>
<dbReference type="CTD" id="6581"/>
<dbReference type="MGI" id="MGI:1333817">
    <property type="gene designation" value="Slc22a3"/>
</dbReference>
<dbReference type="VEuPathDB" id="HostDB:ENSMUSG00000023828"/>
<dbReference type="eggNOG" id="KOG0255">
    <property type="taxonomic scope" value="Eukaryota"/>
</dbReference>
<dbReference type="GeneTree" id="ENSGT00940000160810"/>
<dbReference type="HOGENOM" id="CLU_001265_33_5_1"/>
<dbReference type="InParanoid" id="Q9WTW5"/>
<dbReference type="OMA" id="NYWCRIP"/>
<dbReference type="OrthoDB" id="5141738at2759"/>
<dbReference type="PhylomeDB" id="Q9WTW5"/>
<dbReference type="TreeFam" id="TF315847"/>
<dbReference type="Reactome" id="R-MMU-2161517">
    <property type="pathway name" value="Abacavir transmembrane transport"/>
</dbReference>
<dbReference type="Reactome" id="R-MMU-549127">
    <property type="pathway name" value="Organic cation transport"/>
</dbReference>
<dbReference type="BioGRID-ORCS" id="20519">
    <property type="hits" value="3 hits in 76 CRISPR screens"/>
</dbReference>
<dbReference type="ChiTaRS" id="Slc22a3">
    <property type="organism name" value="mouse"/>
</dbReference>
<dbReference type="PRO" id="PR:Q9WTW5"/>
<dbReference type="Proteomes" id="UP000000589">
    <property type="component" value="Chromosome 17"/>
</dbReference>
<dbReference type="RNAct" id="Q9WTW5">
    <property type="molecule type" value="protein"/>
</dbReference>
<dbReference type="Bgee" id="ENSMUSG00000023828">
    <property type="expression patterns" value="Expressed in placenta labyrinth and 95 other cell types or tissues"/>
</dbReference>
<dbReference type="ExpressionAtlas" id="Q9WTW5">
    <property type="expression patterns" value="baseline and differential"/>
</dbReference>
<dbReference type="GO" id="GO:0016324">
    <property type="term" value="C:apical plasma membrane"/>
    <property type="evidence" value="ECO:0000314"/>
    <property type="project" value="UniProtKB"/>
</dbReference>
<dbReference type="GO" id="GO:0016323">
    <property type="term" value="C:basolateral plasma membrane"/>
    <property type="evidence" value="ECO:0000250"/>
    <property type="project" value="UniProtKB"/>
</dbReference>
<dbReference type="GO" id="GO:0012505">
    <property type="term" value="C:endomembrane system"/>
    <property type="evidence" value="ECO:0000314"/>
    <property type="project" value="UniProtKB"/>
</dbReference>
<dbReference type="GO" id="GO:0031966">
    <property type="term" value="C:mitochondrial membrane"/>
    <property type="evidence" value="ECO:0000314"/>
    <property type="project" value="UniProtKB"/>
</dbReference>
<dbReference type="GO" id="GO:0043025">
    <property type="term" value="C:neuronal cell body"/>
    <property type="evidence" value="ECO:0000314"/>
    <property type="project" value="ARUK-UCL"/>
</dbReference>
<dbReference type="GO" id="GO:0005640">
    <property type="term" value="C:nuclear outer membrane"/>
    <property type="evidence" value="ECO:0007669"/>
    <property type="project" value="UniProtKB-SubCell"/>
</dbReference>
<dbReference type="GO" id="GO:0005886">
    <property type="term" value="C:plasma membrane"/>
    <property type="evidence" value="ECO:0000314"/>
    <property type="project" value="UniProtKB"/>
</dbReference>
<dbReference type="GO" id="GO:0098793">
    <property type="term" value="C:presynapse"/>
    <property type="evidence" value="ECO:0007669"/>
    <property type="project" value="GOC"/>
</dbReference>
<dbReference type="GO" id="GO:0005330">
    <property type="term" value="F:dopamine:sodium symporter activity"/>
    <property type="evidence" value="ECO:0007669"/>
    <property type="project" value="Ensembl"/>
</dbReference>
<dbReference type="GO" id="GO:0008504">
    <property type="term" value="F:monoamine transmembrane transporter activity"/>
    <property type="evidence" value="ECO:0000315"/>
    <property type="project" value="UniProtKB"/>
</dbReference>
<dbReference type="GO" id="GO:0005326">
    <property type="term" value="F:neurotransmitter transmembrane transporter activity"/>
    <property type="evidence" value="ECO:0000315"/>
    <property type="project" value="UniProtKB"/>
</dbReference>
<dbReference type="GO" id="GO:0008514">
    <property type="term" value="F:organic anion transmembrane transporter activity"/>
    <property type="evidence" value="ECO:0007669"/>
    <property type="project" value="Ensembl"/>
</dbReference>
<dbReference type="GO" id="GO:0015101">
    <property type="term" value="F:organic cation transmembrane transporter activity"/>
    <property type="evidence" value="ECO:0000314"/>
    <property type="project" value="MGI"/>
</dbReference>
<dbReference type="GO" id="GO:0015651">
    <property type="term" value="F:quaternary ammonium group transmembrane transporter activity"/>
    <property type="evidence" value="ECO:0000314"/>
    <property type="project" value="MGI"/>
</dbReference>
<dbReference type="GO" id="GO:0015606">
    <property type="term" value="F:spermidine transmembrane transporter activity"/>
    <property type="evidence" value="ECO:0000250"/>
    <property type="project" value="UniProtKB"/>
</dbReference>
<dbReference type="GO" id="GO:0019534">
    <property type="term" value="F:toxin transmembrane transporter activity"/>
    <property type="evidence" value="ECO:0007669"/>
    <property type="project" value="Ensembl"/>
</dbReference>
<dbReference type="GO" id="GO:0022857">
    <property type="term" value="F:transmembrane transporter activity"/>
    <property type="evidence" value="ECO:0000314"/>
    <property type="project" value="MGI"/>
</dbReference>
<dbReference type="GO" id="GO:1990748">
    <property type="term" value="P:cellular detoxification"/>
    <property type="evidence" value="ECO:0007669"/>
    <property type="project" value="Ensembl"/>
</dbReference>
<dbReference type="GO" id="GO:0015872">
    <property type="term" value="P:dopamine transport"/>
    <property type="evidence" value="ECO:0000315"/>
    <property type="project" value="UniProtKB"/>
</dbReference>
<dbReference type="GO" id="GO:0048241">
    <property type="term" value="P:epinephrine transport"/>
    <property type="evidence" value="ECO:0007669"/>
    <property type="project" value="Ensembl"/>
</dbReference>
<dbReference type="GO" id="GO:0051625">
    <property type="term" value="P:epinephrine uptake"/>
    <property type="evidence" value="ECO:0007669"/>
    <property type="project" value="Ensembl"/>
</dbReference>
<dbReference type="GO" id="GO:0051649">
    <property type="term" value="P:establishment of localization in cell"/>
    <property type="evidence" value="ECO:0000315"/>
    <property type="project" value="MGI"/>
</dbReference>
<dbReference type="GO" id="GO:0051608">
    <property type="term" value="P:histamine transport"/>
    <property type="evidence" value="ECO:0000315"/>
    <property type="project" value="ARUK-UCL"/>
</dbReference>
<dbReference type="GO" id="GO:0051615">
    <property type="term" value="P:histamine uptake"/>
    <property type="evidence" value="ECO:0000315"/>
    <property type="project" value="MGI"/>
</dbReference>
<dbReference type="GO" id="GO:0015844">
    <property type="term" value="P:monoamine transport"/>
    <property type="evidence" value="ECO:0000315"/>
    <property type="project" value="MGI"/>
</dbReference>
<dbReference type="GO" id="GO:0015718">
    <property type="term" value="P:monocarboxylic acid transport"/>
    <property type="evidence" value="ECO:0000315"/>
    <property type="project" value="ARUK-UCL"/>
</dbReference>
<dbReference type="GO" id="GO:0006836">
    <property type="term" value="P:neurotransmitter transport"/>
    <property type="evidence" value="ECO:0000315"/>
    <property type="project" value="ARUK-UCL"/>
</dbReference>
<dbReference type="GO" id="GO:0015874">
    <property type="term" value="P:norepinephrine transport"/>
    <property type="evidence" value="ECO:0000315"/>
    <property type="project" value="UniProtKB"/>
</dbReference>
<dbReference type="GO" id="GO:0051620">
    <property type="term" value="P:norepinephrine uptake"/>
    <property type="evidence" value="ECO:0007669"/>
    <property type="project" value="Ensembl"/>
</dbReference>
<dbReference type="GO" id="GO:0015695">
    <property type="term" value="P:organic cation transport"/>
    <property type="evidence" value="ECO:0000314"/>
    <property type="project" value="MGI"/>
</dbReference>
<dbReference type="GO" id="GO:0015850">
    <property type="term" value="P:organic hydroxy compound transport"/>
    <property type="evidence" value="ECO:0000315"/>
    <property type="project" value="ARUK-UCL"/>
</dbReference>
<dbReference type="GO" id="GO:0015697">
    <property type="term" value="P:quaternary ammonium group transport"/>
    <property type="evidence" value="ECO:0000314"/>
    <property type="project" value="MGI"/>
</dbReference>
<dbReference type="GO" id="GO:0032098">
    <property type="term" value="P:regulation of appetite"/>
    <property type="evidence" value="ECO:0000315"/>
    <property type="project" value="MGI"/>
</dbReference>
<dbReference type="GO" id="GO:0006837">
    <property type="term" value="P:serotonin transport"/>
    <property type="evidence" value="ECO:0000315"/>
    <property type="project" value="UniProtKB"/>
</dbReference>
<dbReference type="GO" id="GO:0051610">
    <property type="term" value="P:serotonin uptake"/>
    <property type="evidence" value="ECO:0007669"/>
    <property type="project" value="Ensembl"/>
</dbReference>
<dbReference type="GO" id="GO:0015848">
    <property type="term" value="P:spermidine transport"/>
    <property type="evidence" value="ECO:0000250"/>
    <property type="project" value="UniProtKB"/>
</dbReference>
<dbReference type="GO" id="GO:0042908">
    <property type="term" value="P:xenobiotic transport"/>
    <property type="evidence" value="ECO:0007669"/>
    <property type="project" value="Ensembl"/>
</dbReference>
<dbReference type="CDD" id="cd17379">
    <property type="entry name" value="MFS_SLC22A1_2_3"/>
    <property type="match status" value="1"/>
</dbReference>
<dbReference type="FunFam" id="1.20.1250.20:FF:000165">
    <property type="entry name" value="Solute carrier family 22 member 3"/>
    <property type="match status" value="1"/>
</dbReference>
<dbReference type="Gene3D" id="1.20.1250.20">
    <property type="entry name" value="MFS general substrate transporter like domains"/>
    <property type="match status" value="1"/>
</dbReference>
<dbReference type="InterPro" id="IPR020846">
    <property type="entry name" value="MFS_dom"/>
</dbReference>
<dbReference type="InterPro" id="IPR005828">
    <property type="entry name" value="MFS_sugar_transport-like"/>
</dbReference>
<dbReference type="InterPro" id="IPR036259">
    <property type="entry name" value="MFS_trans_sf"/>
</dbReference>
<dbReference type="InterPro" id="IPR004749">
    <property type="entry name" value="Orgcat_transp/SVOP"/>
</dbReference>
<dbReference type="InterPro" id="IPR005829">
    <property type="entry name" value="Sugar_transporter_CS"/>
</dbReference>
<dbReference type="NCBIfam" id="TIGR00898">
    <property type="entry name" value="2A0119"/>
    <property type="match status" value="1"/>
</dbReference>
<dbReference type="PANTHER" id="PTHR24064">
    <property type="entry name" value="SOLUTE CARRIER FAMILY 22 MEMBER"/>
    <property type="match status" value="1"/>
</dbReference>
<dbReference type="Pfam" id="PF00083">
    <property type="entry name" value="Sugar_tr"/>
    <property type="match status" value="1"/>
</dbReference>
<dbReference type="SUPFAM" id="SSF103473">
    <property type="entry name" value="MFS general substrate transporter"/>
    <property type="match status" value="1"/>
</dbReference>
<dbReference type="PROSITE" id="PS50850">
    <property type="entry name" value="MFS"/>
    <property type="match status" value="1"/>
</dbReference>
<dbReference type="PROSITE" id="PS00216">
    <property type="entry name" value="SUGAR_TRANSPORT_1"/>
    <property type="match status" value="1"/>
</dbReference>
<name>S22A3_MOUSE</name>
<keyword id="KW-1003">Cell membrane</keyword>
<keyword id="KW-0325">Glycoprotein</keyword>
<keyword id="KW-0406">Ion transport</keyword>
<keyword id="KW-0472">Membrane</keyword>
<keyword id="KW-0496">Mitochondrion</keyword>
<keyword id="KW-0539">Nucleus</keyword>
<keyword id="KW-1185">Reference proteome</keyword>
<keyword id="KW-0812">Transmembrane</keyword>
<keyword id="KW-1133">Transmembrane helix</keyword>
<keyword id="KW-0813">Transport</keyword>
<gene>
    <name evidence="13" type="primary">Slc22a3</name>
    <name evidence="9" type="synonym">Oct3</name>
</gene>
<reference evidence="11" key="1">
    <citation type="journal article" date="1999" name="Genomics">
        <title>Cloning of the mouse and human solute carrier 22a3 (Slc22a3/SLC22A3) identifies a conserved cluster of three organic cation transporters on mouse chromosome 17 and human 6q26-q27.</title>
        <authorList>
            <person name="Verhaagh S."/>
            <person name="Schweifer N."/>
            <person name="Barlow D.P."/>
            <person name="Zwart R."/>
        </authorList>
    </citation>
    <scope>NUCLEOTIDE SEQUENCE [GENOMIC DNA / MRNA]</scope>
    <scope>TISSUE SPECIFICITY</scope>
    <scope>DEVELOPMENTAL STAGE</scope>
    <source>
        <strain>CD-1</strain>
        <tissue>Placenta</tissue>
    </source>
</reference>
<reference evidence="11" key="2">
    <citation type="journal article" date="2000" name="Am. J. Physiol.">
        <title>Structure, function, and regional distribution of the organic cation transporter OCT3 in the kidney.</title>
        <authorList>
            <person name="Wu X."/>
            <person name="Huang W."/>
            <person name="Ganapathy M.E."/>
            <person name="Wang H."/>
            <person name="Kekuda R."/>
            <person name="Conway S.J."/>
            <person name="Leibach F.H."/>
            <person name="Ganapathy V."/>
        </authorList>
    </citation>
    <scope>NUCLEOTIDE SEQUENCE</scope>
    <scope>FUNCTION</scope>
    <scope>BIOPHYSICOCHEMICAL PROPERTIES</scope>
    <scope>TISSUE SPECIFICITY</scope>
    <source>
        <tissue>Kidney</tissue>
    </source>
</reference>
<reference key="3">
    <citation type="journal article" date="2008" name="J. Neurochem.">
        <title>Altered aminergic neurotransmission in the brain of organic cation transporter 3-deficient mice.</title>
        <authorList>
            <person name="Vialou V."/>
            <person name="Balasse L."/>
            <person name="Callebert J."/>
            <person name="Launay J.M."/>
            <person name="Giros B."/>
            <person name="Gautron S."/>
        </authorList>
    </citation>
    <scope>FUNCTION</scope>
    <scope>CATALYTIC ACTIVITY</scope>
    <scope>DISRUPTION PHENOTYPE</scope>
    <scope>TISSUE SPECIFICITY</scope>
    <scope>MISCELLANEOUS</scope>
</reference>
<reference key="4">
    <citation type="journal article" date="2009" name="Proc. Natl. Acad. Sci. U.S.A.">
        <title>The organic cation transporter-3 is a pivotal modulator of neurodegeneration in the nigrostriatal dopaminergic pathway.</title>
        <authorList>
            <person name="Cui M."/>
            <person name="Aras R."/>
            <person name="Christian W.V."/>
            <person name="Rappold P.M."/>
            <person name="Hatwar M."/>
            <person name="Panza J."/>
            <person name="Jackson-Lewis V."/>
            <person name="Javitch J.A."/>
            <person name="Ballatori N."/>
            <person name="Przedborski S."/>
            <person name="Tieu K."/>
        </authorList>
    </citation>
    <scope>FUNCTION</scope>
    <scope>DISRUPTION PHENOTYPE</scope>
    <scope>TISSUE SPECIFICITY</scope>
    <scope>MISCELLANEOUS</scope>
</reference>
<reference key="5">
    <citation type="journal article" date="2017" name="Brain Struct. Funct.">
        <title>Organic cation transporter 3 (OCT3) is localized to intracellular and surface membranes in select glial and neuronal cells within the basolateral amygdaloid complex of both rats and mice.</title>
        <authorList>
            <person name="Gasser P.J."/>
            <person name="Hurley M.M."/>
            <person name="Chan J."/>
            <person name="Pickel V.M."/>
        </authorList>
    </citation>
    <scope>FUNCTION</scope>
    <scope>SUBCELLULAR LOCATION</scope>
    <scope>TISSUE SPECIFICITY</scope>
</reference>
<feature type="chain" id="PRO_0000220504" description="Solute carrier family 22 member 3">
    <location>
        <begin position="1"/>
        <end position="551"/>
    </location>
</feature>
<feature type="transmembrane region" description="Helical" evidence="3">
    <location>
        <begin position="21"/>
        <end position="41"/>
    </location>
</feature>
<feature type="transmembrane region" description="Helical" evidence="3">
    <location>
        <begin position="177"/>
        <end position="197"/>
    </location>
</feature>
<feature type="transmembrane region" description="Helical" evidence="3">
    <location>
        <begin position="236"/>
        <end position="256"/>
    </location>
</feature>
<feature type="transmembrane region" description="Helical" evidence="3">
    <location>
        <begin position="264"/>
        <end position="284"/>
    </location>
</feature>
<feature type="transmembrane region" description="Helical" evidence="3">
    <location>
        <begin position="376"/>
        <end position="396"/>
    </location>
</feature>
<feature type="transmembrane region" description="Helical" evidence="3">
    <location>
        <begin position="464"/>
        <end position="484"/>
    </location>
</feature>
<feature type="transmembrane region" description="Helical" evidence="3">
    <location>
        <begin position="493"/>
        <end position="513"/>
    </location>
</feature>
<feature type="short sequence motif" description="Proline-rich sequence" evidence="1">
    <location>
        <begin position="284"/>
        <end position="288"/>
    </location>
</feature>
<feature type="glycosylation site" description="N-linked (GlcNAc...) asparagine" evidence="3">
    <location>
        <position position="72"/>
    </location>
</feature>
<feature type="glycosylation site" description="N-linked (GlcNAc...) asparagine" evidence="3">
    <location>
        <position position="99"/>
    </location>
</feature>
<feature type="glycosylation site" description="N-linked (GlcNAc...) asparagine" evidence="3">
    <location>
        <position position="114"/>
    </location>
</feature>
<feature type="glycosylation site" description="N-linked (GlcNAc...) asparagine" evidence="3">
    <location>
        <position position="199"/>
    </location>
</feature>
<feature type="glycosylation site" description="N-linked (GlcNAc...) asparagine" evidence="3">
    <location>
        <position position="317"/>
    </location>
</feature>
<proteinExistence type="evidence at protein level"/>
<accession>Q9WTW5</accession>
<accession>Q9R209</accession>